<proteinExistence type="inferred from homology"/>
<accession>O03473</accession>
<gene>
    <name type="primary">MT-CYB</name>
    <name type="synonym">COB</name>
    <name type="synonym">CYTB</name>
    <name type="synonym">MTCYB</name>
</gene>
<comment type="function">
    <text evidence="2">Component of the ubiquinol-cytochrome c reductase complex (complex III or cytochrome b-c1 complex) that is part of the mitochondrial respiratory chain. The b-c1 complex mediates electron transfer from ubiquinol to cytochrome c. Contributes to the generation of a proton gradient across the mitochondrial membrane that is then used for ATP synthesis.</text>
</comment>
<comment type="cofactor">
    <cofactor evidence="2">
        <name>heme b</name>
        <dbReference type="ChEBI" id="CHEBI:60344"/>
    </cofactor>
    <text evidence="2">Binds 2 heme b groups non-covalently.</text>
</comment>
<comment type="subunit">
    <text evidence="2">The cytochrome bc1 complex contains 11 subunits: 3 respiratory subunits (MT-CYB, CYC1 and UQCRFS1), 2 core proteins (UQCRC1 and UQCRC2) and 6 low-molecular weight proteins (UQCRH/QCR6, UQCRB/QCR7, UQCRQ/QCR8, UQCR10/QCR9, UQCR11/QCR10 and a cleavage product of UQCRFS1). This cytochrome bc1 complex then forms a dimer.</text>
</comment>
<comment type="subcellular location">
    <subcellularLocation>
        <location evidence="2">Mitochondrion inner membrane</location>
        <topology evidence="2">Multi-pass membrane protein</topology>
    </subcellularLocation>
</comment>
<comment type="miscellaneous">
    <text evidence="1">Heme 1 (or BL or b562) is low-potential and absorbs at about 562 nm, and heme 2 (or BH or b566) is high-potential and absorbs at about 566 nm.</text>
</comment>
<comment type="similarity">
    <text evidence="3 4">Belongs to the cytochrome b family.</text>
</comment>
<comment type="caution">
    <text evidence="2">The full-length protein contains only eight transmembrane helices, not nine as predicted by bioinformatics tools.</text>
</comment>
<name>CYB_MACGI</name>
<feature type="chain" id="PRO_0000061143" description="Cytochrome b">
    <location>
        <begin position="1"/>
        <end position="381"/>
    </location>
</feature>
<feature type="transmembrane region" description="Helical" evidence="2">
    <location>
        <begin position="33"/>
        <end position="53"/>
    </location>
</feature>
<feature type="transmembrane region" description="Helical" evidence="2">
    <location>
        <begin position="77"/>
        <end position="98"/>
    </location>
</feature>
<feature type="transmembrane region" description="Helical" evidence="2">
    <location>
        <begin position="113"/>
        <end position="133"/>
    </location>
</feature>
<feature type="transmembrane region" description="Helical" evidence="2">
    <location>
        <begin position="178"/>
        <end position="198"/>
    </location>
</feature>
<feature type="transmembrane region" description="Helical" evidence="2">
    <location>
        <begin position="226"/>
        <end position="246"/>
    </location>
</feature>
<feature type="transmembrane region" description="Helical" evidence="2">
    <location>
        <begin position="288"/>
        <end position="308"/>
    </location>
</feature>
<feature type="transmembrane region" description="Helical" evidence="2">
    <location>
        <begin position="320"/>
        <end position="340"/>
    </location>
</feature>
<feature type="transmembrane region" description="Helical" evidence="2">
    <location>
        <begin position="347"/>
        <end position="367"/>
    </location>
</feature>
<feature type="binding site" description="axial binding residue" evidence="2">
    <location>
        <position position="83"/>
    </location>
    <ligand>
        <name>heme b</name>
        <dbReference type="ChEBI" id="CHEBI:60344"/>
        <label>b562</label>
    </ligand>
    <ligandPart>
        <name>Fe</name>
        <dbReference type="ChEBI" id="CHEBI:18248"/>
    </ligandPart>
</feature>
<feature type="binding site" description="axial binding residue" evidence="2">
    <location>
        <position position="97"/>
    </location>
    <ligand>
        <name>heme b</name>
        <dbReference type="ChEBI" id="CHEBI:60344"/>
        <label>b566</label>
    </ligand>
    <ligandPart>
        <name>Fe</name>
        <dbReference type="ChEBI" id="CHEBI:18248"/>
    </ligandPart>
</feature>
<feature type="binding site" description="axial binding residue" evidence="2">
    <location>
        <position position="182"/>
    </location>
    <ligand>
        <name>heme b</name>
        <dbReference type="ChEBI" id="CHEBI:60344"/>
        <label>b562</label>
    </ligand>
    <ligandPart>
        <name>Fe</name>
        <dbReference type="ChEBI" id="CHEBI:18248"/>
    </ligandPart>
</feature>
<feature type="binding site" description="axial binding residue" evidence="2">
    <location>
        <position position="196"/>
    </location>
    <ligand>
        <name>heme b</name>
        <dbReference type="ChEBI" id="CHEBI:60344"/>
        <label>b566</label>
    </ligand>
    <ligandPart>
        <name>Fe</name>
        <dbReference type="ChEBI" id="CHEBI:18248"/>
    </ligandPart>
</feature>
<feature type="binding site" evidence="2">
    <location>
        <position position="201"/>
    </location>
    <ligand>
        <name>a ubiquinone</name>
        <dbReference type="ChEBI" id="CHEBI:16389"/>
    </ligand>
</feature>
<keyword id="KW-0249">Electron transport</keyword>
<keyword id="KW-0349">Heme</keyword>
<keyword id="KW-0408">Iron</keyword>
<keyword id="KW-0472">Membrane</keyword>
<keyword id="KW-0479">Metal-binding</keyword>
<keyword id="KW-0496">Mitochondrion</keyword>
<keyword id="KW-0999">Mitochondrion inner membrane</keyword>
<keyword id="KW-0679">Respiratory chain</keyword>
<keyword id="KW-0812">Transmembrane</keyword>
<keyword id="KW-1133">Transmembrane helix</keyword>
<keyword id="KW-0813">Transport</keyword>
<keyword id="KW-0830">Ubiquinone</keyword>
<reference key="1">
    <citation type="journal article" date="1997" name="Proc. R. Soc. B">
        <title>DNA phylogeny of the marsupial wolf resolved.</title>
        <authorList>
            <person name="Krajewski C."/>
            <person name="Buckley L."/>
            <person name="Westerman M."/>
        </authorList>
    </citation>
    <scope>NUCLEOTIDE SEQUENCE [GENOMIC DNA]</scope>
</reference>
<evidence type="ECO:0000250" key="1"/>
<evidence type="ECO:0000250" key="2">
    <source>
        <dbReference type="UniProtKB" id="P00157"/>
    </source>
</evidence>
<evidence type="ECO:0000255" key="3">
    <source>
        <dbReference type="PROSITE-ProRule" id="PRU00967"/>
    </source>
</evidence>
<evidence type="ECO:0000255" key="4">
    <source>
        <dbReference type="PROSITE-ProRule" id="PRU00968"/>
    </source>
</evidence>
<geneLocation type="mitochondrion"/>
<dbReference type="EMBL" id="U87137">
    <property type="protein sequence ID" value="AAB91325.1"/>
    <property type="molecule type" value="Genomic_DNA"/>
</dbReference>
<dbReference type="SMR" id="O03473"/>
<dbReference type="GO" id="GO:0005743">
    <property type="term" value="C:mitochondrial inner membrane"/>
    <property type="evidence" value="ECO:0007669"/>
    <property type="project" value="UniProtKB-SubCell"/>
</dbReference>
<dbReference type="GO" id="GO:0045275">
    <property type="term" value="C:respiratory chain complex III"/>
    <property type="evidence" value="ECO:0007669"/>
    <property type="project" value="InterPro"/>
</dbReference>
<dbReference type="GO" id="GO:0046872">
    <property type="term" value="F:metal ion binding"/>
    <property type="evidence" value="ECO:0007669"/>
    <property type="project" value="UniProtKB-KW"/>
</dbReference>
<dbReference type="GO" id="GO:0008121">
    <property type="term" value="F:ubiquinol-cytochrome-c reductase activity"/>
    <property type="evidence" value="ECO:0007669"/>
    <property type="project" value="InterPro"/>
</dbReference>
<dbReference type="GO" id="GO:0006122">
    <property type="term" value="P:mitochondrial electron transport, ubiquinol to cytochrome c"/>
    <property type="evidence" value="ECO:0007669"/>
    <property type="project" value="TreeGrafter"/>
</dbReference>
<dbReference type="CDD" id="cd00290">
    <property type="entry name" value="cytochrome_b_C"/>
    <property type="match status" value="1"/>
</dbReference>
<dbReference type="CDD" id="cd00284">
    <property type="entry name" value="Cytochrome_b_N"/>
    <property type="match status" value="1"/>
</dbReference>
<dbReference type="FunFam" id="1.20.810.10:FF:000002">
    <property type="entry name" value="Cytochrome b"/>
    <property type="match status" value="1"/>
</dbReference>
<dbReference type="Gene3D" id="1.20.810.10">
    <property type="entry name" value="Cytochrome Bc1 Complex, Chain C"/>
    <property type="match status" value="1"/>
</dbReference>
<dbReference type="InterPro" id="IPR005798">
    <property type="entry name" value="Cyt_b/b6_C"/>
</dbReference>
<dbReference type="InterPro" id="IPR036150">
    <property type="entry name" value="Cyt_b/b6_C_sf"/>
</dbReference>
<dbReference type="InterPro" id="IPR005797">
    <property type="entry name" value="Cyt_b/b6_N"/>
</dbReference>
<dbReference type="InterPro" id="IPR027387">
    <property type="entry name" value="Cytb/b6-like_sf"/>
</dbReference>
<dbReference type="InterPro" id="IPR030689">
    <property type="entry name" value="Cytochrome_b"/>
</dbReference>
<dbReference type="InterPro" id="IPR048260">
    <property type="entry name" value="Cytochrome_b_C_euk/bac"/>
</dbReference>
<dbReference type="InterPro" id="IPR048259">
    <property type="entry name" value="Cytochrome_b_N_euk/bac"/>
</dbReference>
<dbReference type="InterPro" id="IPR016174">
    <property type="entry name" value="Di-haem_cyt_TM"/>
</dbReference>
<dbReference type="PANTHER" id="PTHR19271">
    <property type="entry name" value="CYTOCHROME B"/>
    <property type="match status" value="1"/>
</dbReference>
<dbReference type="PANTHER" id="PTHR19271:SF16">
    <property type="entry name" value="CYTOCHROME B"/>
    <property type="match status" value="1"/>
</dbReference>
<dbReference type="Pfam" id="PF00032">
    <property type="entry name" value="Cytochrom_B_C"/>
    <property type="match status" value="1"/>
</dbReference>
<dbReference type="Pfam" id="PF00033">
    <property type="entry name" value="Cytochrome_B"/>
    <property type="match status" value="1"/>
</dbReference>
<dbReference type="PIRSF" id="PIRSF038885">
    <property type="entry name" value="COB"/>
    <property type="match status" value="1"/>
</dbReference>
<dbReference type="SUPFAM" id="SSF81648">
    <property type="entry name" value="a domain/subunit of cytochrome bc1 complex (Ubiquinol-cytochrome c reductase)"/>
    <property type="match status" value="1"/>
</dbReference>
<dbReference type="SUPFAM" id="SSF81342">
    <property type="entry name" value="Transmembrane di-heme cytochromes"/>
    <property type="match status" value="1"/>
</dbReference>
<dbReference type="PROSITE" id="PS51003">
    <property type="entry name" value="CYTB_CTER"/>
    <property type="match status" value="1"/>
</dbReference>
<dbReference type="PROSITE" id="PS51002">
    <property type="entry name" value="CYTB_NTER"/>
    <property type="match status" value="1"/>
</dbReference>
<organism>
    <name type="scientific">Macropus giganteus</name>
    <name type="common">Eastern gray kangaroo</name>
    <dbReference type="NCBI Taxonomy" id="9317"/>
    <lineage>
        <taxon>Eukaryota</taxon>
        <taxon>Metazoa</taxon>
        <taxon>Chordata</taxon>
        <taxon>Craniata</taxon>
        <taxon>Vertebrata</taxon>
        <taxon>Euteleostomi</taxon>
        <taxon>Mammalia</taxon>
        <taxon>Metatheria</taxon>
        <taxon>Diprotodontia</taxon>
        <taxon>Macropodidae</taxon>
        <taxon>Macropus</taxon>
    </lineage>
</organism>
<sequence length="381" mass="42845">MTNLRKTHPLIKIINHSFTVLPAPSNISAWWNFGSLLGACLIIQILTGLFLAMHYTADTLTAFSSVAHICRDVNYGWLIRNLHANGASMFFMCLFLHVGRGIYYGSYLYKETWNIGVILLLTVMATAFVGYVLPWGQMSFWGATVITNLLSAIPYIGTTLVEWIWGGFSVDKATLTRFFAFHFILPFIITALVLVHLLFLHETGSNNPSGINPDSDKIPFHPYYTIKDALGLMLMLLVLLTLALFSPDMLGDPDNFSPAKPTQHPPHIKPEWYFLFAYAILRSIPNKLGGVLALLASILILLIIPLLHTSKQRSLMFRPISQTLFWILTANLITLTWIGGQPVEQPFIIIGQIASISYFLLIILLMPLAGLFENYMLEPKW</sequence>
<protein>
    <recommendedName>
        <fullName>Cytochrome b</fullName>
    </recommendedName>
    <alternativeName>
        <fullName>Complex III subunit 3</fullName>
    </alternativeName>
    <alternativeName>
        <fullName>Complex III subunit III</fullName>
    </alternativeName>
    <alternativeName>
        <fullName>Cytochrome b-c1 complex subunit 3</fullName>
    </alternativeName>
    <alternativeName>
        <fullName>Ubiquinol-cytochrome-c reductase complex cytochrome b subunit</fullName>
    </alternativeName>
</protein>